<evidence type="ECO:0000255" key="1">
    <source>
        <dbReference type="HAMAP-Rule" id="MF_03149"/>
    </source>
</evidence>
<gene>
    <name evidence="1" type="primary">GATC</name>
    <name type="ORF">RCOM_0799010</name>
</gene>
<protein>
    <recommendedName>
        <fullName evidence="1">Glutamyl-tRNA(Gln) amidotransferase subunit C, chloroplastic/mitochondrial</fullName>
        <shortName evidence="1">Glu-AdT subunit C</shortName>
        <ecNumber evidence="1">6.3.5.-</ecNumber>
    </recommendedName>
</protein>
<comment type="function">
    <text evidence="1">Allows the formation of correctly charged Gln-tRNA(Gln) through the transamidation of misacylated Glu-tRNA(Gln) in chloroplasts and mitochondria. The reaction takes place in the presence of glutamine and ATP through an activated gamma-phospho-Glu-tRNA(Gln).</text>
</comment>
<comment type="catalytic activity">
    <reaction evidence="1">
        <text>L-glutamyl-tRNA(Gln) + L-glutamine + ATP + H2O = L-glutaminyl-tRNA(Gln) + L-glutamate + ADP + phosphate + H(+)</text>
        <dbReference type="Rhea" id="RHEA:17521"/>
        <dbReference type="Rhea" id="RHEA-COMP:9681"/>
        <dbReference type="Rhea" id="RHEA-COMP:9684"/>
        <dbReference type="ChEBI" id="CHEBI:15377"/>
        <dbReference type="ChEBI" id="CHEBI:15378"/>
        <dbReference type="ChEBI" id="CHEBI:29985"/>
        <dbReference type="ChEBI" id="CHEBI:30616"/>
        <dbReference type="ChEBI" id="CHEBI:43474"/>
        <dbReference type="ChEBI" id="CHEBI:58359"/>
        <dbReference type="ChEBI" id="CHEBI:78520"/>
        <dbReference type="ChEBI" id="CHEBI:78521"/>
        <dbReference type="ChEBI" id="CHEBI:456216"/>
    </reaction>
</comment>
<comment type="subunit">
    <text evidence="1">Subunit of the heterotrimeric GatCAB amidotransferase (AdT) complex, composed of A, B and C subunits.</text>
</comment>
<comment type="subcellular location">
    <subcellularLocation>
        <location evidence="1">Mitochondrion</location>
    </subcellularLocation>
    <subcellularLocation>
        <location evidence="1">Plastid</location>
        <location evidence="1">Chloroplast</location>
    </subcellularLocation>
</comment>
<comment type="miscellaneous">
    <text evidence="1">This protein may be expected to contain an N-terminal transit peptide but none has been predicted.</text>
</comment>
<comment type="similarity">
    <text evidence="1">Belongs to the GatC family.</text>
</comment>
<dbReference type="EC" id="6.3.5.-" evidence="1"/>
<dbReference type="EMBL" id="EQ973807">
    <property type="protein sequence ID" value="EEF45832.1"/>
    <property type="molecule type" value="Genomic_DNA"/>
</dbReference>
<dbReference type="SMR" id="B9RRX2"/>
<dbReference type="FunCoup" id="B9RRX2">
    <property type="interactions" value="586"/>
</dbReference>
<dbReference type="STRING" id="3988.B9RRX2"/>
<dbReference type="GeneID" id="8275644"/>
<dbReference type="KEGG" id="rcu:8275644"/>
<dbReference type="eggNOG" id="KOG2271">
    <property type="taxonomic scope" value="Eukaryota"/>
</dbReference>
<dbReference type="InParanoid" id="B9RRX2"/>
<dbReference type="OMA" id="KPTRTAN"/>
<dbReference type="OrthoDB" id="2020502at2759"/>
<dbReference type="Proteomes" id="UP000008311">
    <property type="component" value="Unassembled WGS sequence"/>
</dbReference>
<dbReference type="GO" id="GO:0009507">
    <property type="term" value="C:chloroplast"/>
    <property type="evidence" value="ECO:0007669"/>
    <property type="project" value="UniProtKB-SubCell"/>
</dbReference>
<dbReference type="GO" id="GO:0030956">
    <property type="term" value="C:glutamyl-tRNA(Gln) amidotransferase complex"/>
    <property type="evidence" value="ECO:0000318"/>
    <property type="project" value="GO_Central"/>
</dbReference>
<dbReference type="GO" id="GO:0005739">
    <property type="term" value="C:mitochondrion"/>
    <property type="evidence" value="ECO:0000318"/>
    <property type="project" value="GO_Central"/>
</dbReference>
<dbReference type="GO" id="GO:0005524">
    <property type="term" value="F:ATP binding"/>
    <property type="evidence" value="ECO:0007669"/>
    <property type="project" value="UniProtKB-KW"/>
</dbReference>
<dbReference type="GO" id="GO:0050567">
    <property type="term" value="F:glutaminyl-tRNA synthase (glutamine-hydrolyzing) activity"/>
    <property type="evidence" value="ECO:0007669"/>
    <property type="project" value="UniProtKB-UniRule"/>
</dbReference>
<dbReference type="GO" id="GO:0070681">
    <property type="term" value="P:glutaminyl-tRNAGln biosynthesis via transamidation"/>
    <property type="evidence" value="ECO:0000318"/>
    <property type="project" value="GO_Central"/>
</dbReference>
<dbReference type="GO" id="GO:0032543">
    <property type="term" value="P:mitochondrial translation"/>
    <property type="evidence" value="ECO:0000318"/>
    <property type="project" value="GO_Central"/>
</dbReference>
<dbReference type="GO" id="GO:0006450">
    <property type="term" value="P:regulation of translational fidelity"/>
    <property type="evidence" value="ECO:0007669"/>
    <property type="project" value="InterPro"/>
</dbReference>
<dbReference type="Gene3D" id="1.10.20.60">
    <property type="entry name" value="Glu-tRNAGln amidotransferase C subunit, N-terminal domain"/>
    <property type="match status" value="1"/>
</dbReference>
<dbReference type="HAMAP" id="MF_00122">
    <property type="entry name" value="GatC"/>
    <property type="match status" value="1"/>
</dbReference>
<dbReference type="InterPro" id="IPR036113">
    <property type="entry name" value="Asp/Glu-ADT_sf_sub_c"/>
</dbReference>
<dbReference type="InterPro" id="IPR003837">
    <property type="entry name" value="GatC"/>
</dbReference>
<dbReference type="NCBIfam" id="TIGR00135">
    <property type="entry name" value="gatC"/>
    <property type="match status" value="1"/>
</dbReference>
<dbReference type="PANTHER" id="PTHR15004">
    <property type="entry name" value="GLUTAMYL-TRNA(GLN) AMIDOTRANSFERASE SUBUNIT C, MITOCHONDRIAL"/>
    <property type="match status" value="1"/>
</dbReference>
<dbReference type="PANTHER" id="PTHR15004:SF0">
    <property type="entry name" value="GLUTAMYL-TRNA(GLN) AMIDOTRANSFERASE SUBUNIT C, MITOCHONDRIAL"/>
    <property type="match status" value="1"/>
</dbReference>
<dbReference type="Pfam" id="PF02686">
    <property type="entry name" value="GatC"/>
    <property type="match status" value="1"/>
</dbReference>
<dbReference type="SUPFAM" id="SSF141000">
    <property type="entry name" value="Glu-tRNAGln amidotransferase C subunit"/>
    <property type="match status" value="1"/>
</dbReference>
<reference key="1">
    <citation type="journal article" date="2010" name="Nat. Biotechnol.">
        <title>Draft genome sequence of the oilseed species Ricinus communis.</title>
        <authorList>
            <person name="Chan A.P."/>
            <person name="Crabtree J."/>
            <person name="Zhao Q."/>
            <person name="Lorenzi H."/>
            <person name="Orvis J."/>
            <person name="Puiu D."/>
            <person name="Melake-Berhan A."/>
            <person name="Jones K.M."/>
            <person name="Redman J."/>
            <person name="Chen G."/>
            <person name="Cahoon E.B."/>
            <person name="Gedil M."/>
            <person name="Stanke M."/>
            <person name="Haas B.J."/>
            <person name="Wortman J.R."/>
            <person name="Fraser-Liggett C.M."/>
            <person name="Ravel J."/>
            <person name="Rabinowicz P.D."/>
        </authorList>
    </citation>
    <scope>NUCLEOTIDE SEQUENCE [LARGE SCALE GENOMIC DNA]</scope>
    <source>
        <strain>cv. Hale</strain>
    </source>
</reference>
<feature type="chain" id="PRO_0000413322" description="Glutamyl-tRNA(Gln) amidotransferase subunit C, chloroplastic/mitochondrial">
    <location>
        <begin position="1"/>
        <end position="143"/>
    </location>
</feature>
<organism>
    <name type="scientific">Ricinus communis</name>
    <name type="common">Castor bean</name>
    <dbReference type="NCBI Taxonomy" id="3988"/>
    <lineage>
        <taxon>Eukaryota</taxon>
        <taxon>Viridiplantae</taxon>
        <taxon>Streptophyta</taxon>
        <taxon>Embryophyta</taxon>
        <taxon>Tracheophyta</taxon>
        <taxon>Spermatophyta</taxon>
        <taxon>Magnoliopsida</taxon>
        <taxon>eudicotyledons</taxon>
        <taxon>Gunneridae</taxon>
        <taxon>Pentapetalae</taxon>
        <taxon>rosids</taxon>
        <taxon>fabids</taxon>
        <taxon>Malpighiales</taxon>
        <taxon>Euphorbiaceae</taxon>
        <taxon>Acalyphoideae</taxon>
        <taxon>Acalypheae</taxon>
        <taxon>Ricinus</taxon>
    </lineage>
</organism>
<proteinExistence type="inferred from homology"/>
<keyword id="KW-0067">ATP-binding</keyword>
<keyword id="KW-0150">Chloroplast</keyword>
<keyword id="KW-0436">Ligase</keyword>
<keyword id="KW-0496">Mitochondrion</keyword>
<keyword id="KW-0547">Nucleotide-binding</keyword>
<keyword id="KW-0934">Plastid</keyword>
<keyword id="KW-0648">Protein biosynthesis</keyword>
<keyword id="KW-1185">Reference proteome</keyword>
<name>GATC_RICCO</name>
<accession>B9RRX2</accession>
<sequence>MGSRALLLLKVALPLKHQIKCLNYTKITPASELLTKRRFSIKATNGSSLQPPDVSRLAETARISLNQNEVEEFAPKIRQVIDWFGQLQAVDLNSVEPAIRADSEGENLRDDVPETFSEREAIIAAVPSYEKPYVKVPKVLNKE</sequence>